<gene>
    <name type="primary">ZNF107</name>
    <name type="synonym">ZFD25</name>
    <name type="synonym">ZNF588</name>
</gene>
<keyword id="KW-0238">DNA-binding</keyword>
<keyword id="KW-1017">Isopeptide bond</keyword>
<keyword id="KW-0479">Metal-binding</keyword>
<keyword id="KW-0539">Nucleus</keyword>
<keyword id="KW-1267">Proteomics identification</keyword>
<keyword id="KW-1185">Reference proteome</keyword>
<keyword id="KW-0677">Repeat</keyword>
<keyword id="KW-0804">Transcription</keyword>
<keyword id="KW-0805">Transcription regulation</keyword>
<keyword id="KW-0832">Ubl conjugation</keyword>
<keyword id="KW-0862">Zinc</keyword>
<keyword id="KW-0863">Zinc-finger</keyword>
<organism>
    <name type="scientific">Homo sapiens</name>
    <name type="common">Human</name>
    <dbReference type="NCBI Taxonomy" id="9606"/>
    <lineage>
        <taxon>Eukaryota</taxon>
        <taxon>Metazoa</taxon>
        <taxon>Chordata</taxon>
        <taxon>Craniata</taxon>
        <taxon>Vertebrata</taxon>
        <taxon>Euteleostomi</taxon>
        <taxon>Mammalia</taxon>
        <taxon>Eutheria</taxon>
        <taxon>Euarchontoglires</taxon>
        <taxon>Primates</taxon>
        <taxon>Haplorrhini</taxon>
        <taxon>Catarrhini</taxon>
        <taxon>Hominidae</taxon>
        <taxon>Homo</taxon>
    </lineage>
</organism>
<reference key="1">
    <citation type="journal article" date="1999" name="Biochim. Biophys. Acta">
        <title>Cloning and characterization of a novel gene encoding a zinc finger protein with 25 fingers.</title>
        <authorList>
            <person name="Li X.-A."/>
            <person name="Kokame K."/>
            <person name="Okubo K."/>
            <person name="Shimokado K."/>
            <person name="Tsukamoto Y."/>
            <person name="Miyata T."/>
            <person name="Kato H."/>
            <person name="Yutani C."/>
        </authorList>
    </citation>
    <scope>NUCLEOTIDE SEQUENCE [MRNA]</scope>
    <source>
        <tissue>Brain</tissue>
    </source>
</reference>
<reference key="2">
    <citation type="journal article" date="2004" name="Genome Res.">
        <title>The status, quality, and expansion of the NIH full-length cDNA project: the Mammalian Gene Collection (MGC).</title>
        <authorList>
            <consortium name="The MGC Project Team"/>
        </authorList>
    </citation>
    <scope>NUCLEOTIDE SEQUENCE [LARGE SCALE MRNA]</scope>
    <source>
        <tissue>Testis</tissue>
    </source>
</reference>
<reference key="3">
    <citation type="journal article" date="2017" name="Nat. Struct. Mol. Biol.">
        <title>Site-specific mapping of the human SUMO proteome reveals co-modification with phosphorylation.</title>
        <authorList>
            <person name="Hendriks I.A."/>
            <person name="Lyon D."/>
            <person name="Young C."/>
            <person name="Jensen L.J."/>
            <person name="Vertegaal A.C."/>
            <person name="Nielsen M.L."/>
        </authorList>
    </citation>
    <scope>SUMOYLATION [LARGE SCALE ANALYSIS] AT LYS-186</scope>
    <scope>IDENTIFICATION BY MASS SPECTROMETRY [LARGE SCALE ANALYSIS]</scope>
</reference>
<dbReference type="EMBL" id="AB027251">
    <property type="protein sequence ID" value="BAA85623.1"/>
    <property type="molecule type" value="mRNA"/>
</dbReference>
<dbReference type="EMBL" id="BC047243">
    <property type="protein sequence ID" value="AAH47243.1"/>
    <property type="molecule type" value="mRNA"/>
</dbReference>
<dbReference type="CCDS" id="CCDS5527.1"/>
<dbReference type="RefSeq" id="NP_001013768.1">
    <property type="nucleotide sequence ID" value="NM_001013746.3"/>
</dbReference>
<dbReference type="RefSeq" id="NP_057304.1">
    <property type="nucleotide sequence ID" value="NM_016220.5"/>
</dbReference>
<dbReference type="RefSeq" id="XP_016867772.1">
    <property type="nucleotide sequence ID" value="XM_017012283.1"/>
</dbReference>
<dbReference type="RefSeq" id="XP_016867773.1">
    <property type="nucleotide sequence ID" value="XM_017012284.1"/>
</dbReference>
<dbReference type="RefSeq" id="XP_016867774.1">
    <property type="nucleotide sequence ID" value="XM_017012285.1"/>
</dbReference>
<dbReference type="RefSeq" id="XP_016867775.1">
    <property type="nucleotide sequence ID" value="XM_017012286.2"/>
</dbReference>
<dbReference type="RefSeq" id="XP_047276407.1">
    <property type="nucleotide sequence ID" value="XM_047420451.1"/>
</dbReference>
<dbReference type="RefSeq" id="XP_047276408.1">
    <property type="nucleotide sequence ID" value="XM_047420452.1"/>
</dbReference>
<dbReference type="RefSeq" id="XP_054214324.1">
    <property type="nucleotide sequence ID" value="XM_054358349.1"/>
</dbReference>
<dbReference type="RefSeq" id="XP_054214325.1">
    <property type="nucleotide sequence ID" value="XM_054358350.1"/>
</dbReference>
<dbReference type="RefSeq" id="XP_054214326.1">
    <property type="nucleotide sequence ID" value="XM_054358351.1"/>
</dbReference>
<dbReference type="RefSeq" id="XP_054214327.1">
    <property type="nucleotide sequence ID" value="XM_054358352.1"/>
</dbReference>
<dbReference type="RefSeq" id="XP_054214328.1">
    <property type="nucleotide sequence ID" value="XM_054358353.1"/>
</dbReference>
<dbReference type="RefSeq" id="XP_054214329.1">
    <property type="nucleotide sequence ID" value="XM_054358354.1"/>
</dbReference>
<dbReference type="SMR" id="Q9UII5"/>
<dbReference type="BioGRID" id="119533">
    <property type="interactions" value="31"/>
</dbReference>
<dbReference type="FunCoup" id="Q9UII5">
    <property type="interactions" value="1"/>
</dbReference>
<dbReference type="IntAct" id="Q9UII5">
    <property type="interactions" value="25"/>
</dbReference>
<dbReference type="MINT" id="Q9UII5"/>
<dbReference type="GlyGen" id="Q9UII5">
    <property type="glycosylation" value="1 site"/>
</dbReference>
<dbReference type="iPTMnet" id="Q9UII5"/>
<dbReference type="PhosphoSitePlus" id="Q9UII5"/>
<dbReference type="BioMuta" id="ZNF107"/>
<dbReference type="DMDM" id="21542325"/>
<dbReference type="jPOST" id="Q9UII5"/>
<dbReference type="MassIVE" id="Q9UII5"/>
<dbReference type="PaxDb" id="9606-ENSP00000483720"/>
<dbReference type="PeptideAtlas" id="Q9UII5"/>
<dbReference type="ProteomicsDB" id="84528"/>
<dbReference type="Pumba" id="Q9UII5"/>
<dbReference type="Antibodypedia" id="55871">
    <property type="antibodies" value="3 antibodies from 3 providers"/>
</dbReference>
<dbReference type="DNASU" id="51427"/>
<dbReference type="Ensembl" id="ENST00000344930.7">
    <property type="protein sequence ID" value="ENSP00000343443.3"/>
    <property type="gene ID" value="ENSG00000196247.13"/>
</dbReference>
<dbReference type="Ensembl" id="ENST00000423627.6">
    <property type="protein sequence ID" value="ENSP00000400037.1"/>
    <property type="gene ID" value="ENSG00000196247.13"/>
</dbReference>
<dbReference type="GeneID" id="51427"/>
<dbReference type="KEGG" id="hsa:51427"/>
<dbReference type="UCSC" id="uc003tte.5">
    <property type="organism name" value="human"/>
</dbReference>
<dbReference type="AGR" id="HGNC:12887"/>
<dbReference type="CTD" id="51427"/>
<dbReference type="DisGeNET" id="51427"/>
<dbReference type="GeneCards" id="ZNF107"/>
<dbReference type="HGNC" id="HGNC:12887">
    <property type="gene designation" value="ZNF107"/>
</dbReference>
<dbReference type="HPA" id="ENSG00000196247">
    <property type="expression patterns" value="Tissue enhanced (lymphoid)"/>
</dbReference>
<dbReference type="MalaCards" id="ZNF107"/>
<dbReference type="MIM" id="603989">
    <property type="type" value="gene"/>
</dbReference>
<dbReference type="neXtProt" id="NX_Q9UII5"/>
<dbReference type="OpenTargets" id="ENSG00000196247"/>
<dbReference type="PharmGKB" id="PA37476"/>
<dbReference type="VEuPathDB" id="HostDB:ENSG00000196247"/>
<dbReference type="eggNOG" id="KOG1721">
    <property type="taxonomic scope" value="Eukaryota"/>
</dbReference>
<dbReference type="GeneTree" id="ENSGT00940000164280"/>
<dbReference type="InParanoid" id="Q9UII5"/>
<dbReference type="OMA" id="KKEPWNM"/>
<dbReference type="OrthoDB" id="9411774at2759"/>
<dbReference type="PAN-GO" id="Q9UII5">
    <property type="GO annotations" value="4 GO annotations based on evolutionary models"/>
</dbReference>
<dbReference type="PhylomeDB" id="Q9UII5"/>
<dbReference type="TreeFam" id="TF343410"/>
<dbReference type="PathwayCommons" id="Q9UII5"/>
<dbReference type="SignaLink" id="Q9UII5"/>
<dbReference type="BioGRID-ORCS" id="51427">
    <property type="hits" value="12 hits in 1085 CRISPR screens"/>
</dbReference>
<dbReference type="ChiTaRS" id="ZNF107">
    <property type="organism name" value="human"/>
</dbReference>
<dbReference type="GenomeRNAi" id="51427"/>
<dbReference type="Pharos" id="Q9UII5">
    <property type="development level" value="Tdark"/>
</dbReference>
<dbReference type="PRO" id="PR:Q9UII5"/>
<dbReference type="Proteomes" id="UP000005640">
    <property type="component" value="Chromosome 7"/>
</dbReference>
<dbReference type="RNAct" id="Q9UII5">
    <property type="molecule type" value="protein"/>
</dbReference>
<dbReference type="Bgee" id="ENSG00000196247">
    <property type="expression patterns" value="Expressed in secondary oocyte and 177 other cell types or tissues"/>
</dbReference>
<dbReference type="ExpressionAtlas" id="Q9UII5">
    <property type="expression patterns" value="baseline and differential"/>
</dbReference>
<dbReference type="GO" id="GO:0005634">
    <property type="term" value="C:nucleus"/>
    <property type="evidence" value="ECO:0000318"/>
    <property type="project" value="GO_Central"/>
</dbReference>
<dbReference type="GO" id="GO:0003677">
    <property type="term" value="F:DNA binding"/>
    <property type="evidence" value="ECO:0007669"/>
    <property type="project" value="UniProtKB-KW"/>
</dbReference>
<dbReference type="GO" id="GO:0008270">
    <property type="term" value="F:zinc ion binding"/>
    <property type="evidence" value="ECO:0007669"/>
    <property type="project" value="UniProtKB-KW"/>
</dbReference>
<dbReference type="GO" id="GO:0006357">
    <property type="term" value="P:regulation of transcription by RNA polymerase II"/>
    <property type="evidence" value="ECO:0000318"/>
    <property type="project" value="GO_Central"/>
</dbReference>
<dbReference type="FunFam" id="3.30.160.60:FF:001737">
    <property type="entry name" value="Zinc finger protein 100"/>
    <property type="match status" value="4"/>
</dbReference>
<dbReference type="FunFam" id="3.30.160.60:FF:002983">
    <property type="entry name" value="Zinc finger protein 107"/>
    <property type="match status" value="2"/>
</dbReference>
<dbReference type="FunFam" id="3.30.160.60:FF:000034">
    <property type="entry name" value="zinc finger protein 25"/>
    <property type="match status" value="3"/>
</dbReference>
<dbReference type="FunFam" id="3.30.160.60:FF:000671">
    <property type="entry name" value="Zinc finger protein 26"/>
    <property type="match status" value="1"/>
</dbReference>
<dbReference type="FunFam" id="3.30.160.60:FF:001408">
    <property type="entry name" value="Zinc finger protein 260"/>
    <property type="match status" value="2"/>
</dbReference>
<dbReference type="FunFam" id="3.30.160.60:FF:001868">
    <property type="entry name" value="Zinc finger protein 264"/>
    <property type="match status" value="1"/>
</dbReference>
<dbReference type="FunFam" id="3.30.160.60:FF:000690">
    <property type="entry name" value="Zinc finger protein 354C"/>
    <property type="match status" value="1"/>
</dbReference>
<dbReference type="FunFam" id="3.30.160.60:FF:000120">
    <property type="entry name" value="Zinc finger protein 430"/>
    <property type="match status" value="3"/>
</dbReference>
<dbReference type="FunFam" id="3.30.160.60:FF:000362">
    <property type="entry name" value="Zinc finger protein 606"/>
    <property type="match status" value="3"/>
</dbReference>
<dbReference type="FunFam" id="3.30.160.60:FF:001671">
    <property type="entry name" value="Zinc finger protein 94"/>
    <property type="match status" value="1"/>
</dbReference>
<dbReference type="FunFam" id="3.30.160.60:FF:000307">
    <property type="entry name" value="Zinc finger protein ZFP69 isoform 1"/>
    <property type="match status" value="2"/>
</dbReference>
<dbReference type="Gene3D" id="3.30.160.60">
    <property type="entry name" value="Classic Zinc Finger"/>
    <property type="match status" value="24"/>
</dbReference>
<dbReference type="InterPro" id="IPR050331">
    <property type="entry name" value="Zinc_finger"/>
</dbReference>
<dbReference type="InterPro" id="IPR036236">
    <property type="entry name" value="Znf_C2H2_sf"/>
</dbReference>
<dbReference type="InterPro" id="IPR013087">
    <property type="entry name" value="Znf_C2H2_type"/>
</dbReference>
<dbReference type="PANTHER" id="PTHR16515">
    <property type="entry name" value="PR DOMAIN ZINC FINGER PROTEIN"/>
    <property type="match status" value="1"/>
</dbReference>
<dbReference type="PANTHER" id="PTHR16515:SF51">
    <property type="entry name" value="ZINC FINGER PROTEIN 833-RELATED"/>
    <property type="match status" value="1"/>
</dbReference>
<dbReference type="Pfam" id="PF00096">
    <property type="entry name" value="zf-C2H2"/>
    <property type="match status" value="17"/>
</dbReference>
<dbReference type="SMART" id="SM00355">
    <property type="entry name" value="ZnF_C2H2"/>
    <property type="match status" value="22"/>
</dbReference>
<dbReference type="SUPFAM" id="SSF57667">
    <property type="entry name" value="beta-beta-alpha zinc fingers"/>
    <property type="match status" value="13"/>
</dbReference>
<dbReference type="PROSITE" id="PS00028">
    <property type="entry name" value="ZINC_FINGER_C2H2_1"/>
    <property type="match status" value="16"/>
</dbReference>
<dbReference type="PROSITE" id="PS50157">
    <property type="entry name" value="ZINC_FINGER_C2H2_2"/>
    <property type="match status" value="24"/>
</dbReference>
<feature type="chain" id="PRO_0000047681" description="Zinc finger protein 107">
    <location>
        <begin position="1"/>
        <end position="783"/>
    </location>
</feature>
<feature type="zinc finger region" description="C2H2-type 1; atypical" evidence="1">
    <location>
        <begin position="76"/>
        <end position="98"/>
    </location>
</feature>
<feature type="zinc finger region" description="C2H2-type 2" evidence="1">
    <location>
        <begin position="104"/>
        <end position="126"/>
    </location>
</feature>
<feature type="zinc finger region" description="C2H2-type 3" evidence="1">
    <location>
        <begin position="132"/>
        <end position="154"/>
    </location>
</feature>
<feature type="zinc finger region" description="C2H2-type 4" evidence="1">
    <location>
        <begin position="160"/>
        <end position="182"/>
    </location>
</feature>
<feature type="zinc finger region" description="C2H2-type 5" evidence="1">
    <location>
        <begin position="188"/>
        <end position="210"/>
    </location>
</feature>
<feature type="zinc finger region" description="C2H2-type 6; atypical" evidence="1">
    <location>
        <begin position="216"/>
        <end position="238"/>
    </location>
</feature>
<feature type="zinc finger region" description="C2H2-type 7" evidence="1">
    <location>
        <begin position="244"/>
        <end position="266"/>
    </location>
</feature>
<feature type="zinc finger region" description="C2H2-type 8; atypical" evidence="1">
    <location>
        <begin position="272"/>
        <end position="294"/>
    </location>
</feature>
<feature type="zinc finger region" description="C2H2-type 9; atypical" evidence="1">
    <location>
        <begin position="300"/>
        <end position="322"/>
    </location>
</feature>
<feature type="zinc finger region" description="C2H2-type 10" evidence="1">
    <location>
        <begin position="328"/>
        <end position="350"/>
    </location>
</feature>
<feature type="zinc finger region" description="C2H2-type 11" evidence="1">
    <location>
        <begin position="356"/>
        <end position="378"/>
    </location>
</feature>
<feature type="zinc finger region" description="C2H2-type 12; atypical" evidence="1">
    <location>
        <begin position="384"/>
        <end position="406"/>
    </location>
</feature>
<feature type="zinc finger region" description="C2H2-type 13" evidence="1">
    <location>
        <begin position="412"/>
        <end position="434"/>
    </location>
</feature>
<feature type="zinc finger region" description="C2H2-type 14" evidence="1">
    <location>
        <begin position="440"/>
        <end position="462"/>
    </location>
</feature>
<feature type="zinc finger region" description="C2H2-type 15" evidence="1">
    <location>
        <begin position="468"/>
        <end position="490"/>
    </location>
</feature>
<feature type="zinc finger region" description="C2H2-type 16" evidence="1">
    <location>
        <begin position="496"/>
        <end position="518"/>
    </location>
</feature>
<feature type="zinc finger region" description="C2H2-type 17; atypical" evidence="1">
    <location>
        <begin position="524"/>
        <end position="546"/>
    </location>
</feature>
<feature type="zinc finger region" description="C2H2-type 18; atypical" evidence="1">
    <location>
        <begin position="552"/>
        <end position="574"/>
    </location>
</feature>
<feature type="zinc finger region" description="C2H2-type 19; atypical" evidence="1">
    <location>
        <begin position="580"/>
        <end position="602"/>
    </location>
</feature>
<feature type="zinc finger region" description="C2H2-type 20" evidence="1">
    <location>
        <begin position="608"/>
        <end position="630"/>
    </location>
</feature>
<feature type="zinc finger region" description="C2H2-type 21" evidence="1">
    <location>
        <begin position="636"/>
        <end position="658"/>
    </location>
</feature>
<feature type="zinc finger region" description="C2H2-type 22" evidence="1">
    <location>
        <begin position="664"/>
        <end position="686"/>
    </location>
</feature>
<feature type="zinc finger region" description="C2H2-type 23" evidence="1">
    <location>
        <begin position="692"/>
        <end position="714"/>
    </location>
</feature>
<feature type="zinc finger region" description="C2H2-type 24" evidence="1">
    <location>
        <begin position="720"/>
        <end position="742"/>
    </location>
</feature>
<feature type="zinc finger region" description="C2H2-type 25; atypical" evidence="1">
    <location>
        <begin position="748"/>
        <end position="770"/>
    </location>
</feature>
<feature type="cross-link" description="Glycyl lysine isopeptide (Lys-Gly) (interchain with G-Cter in SUMO2)" evidence="3">
    <location>
        <position position="186"/>
    </location>
</feature>
<accession>Q9UII5</accession>
<sequence>MVAKPPVMSFHFAQDLWPEQNIKDSFQKVTLRRYGKCEYENLQLRKGCKHVDECTGHKGGHNTVNQCLTATPSKIFQCNKYVKVFDKFSNSNRYKRRHTGNKHFKCKECSKSFCVLSQLTQHRRIHTRVNSYKCEECGKAFNWFSTLTKHKRIHTGEKPYKCEECGKAFNQSSQLTRHKIIHTEEKPNKCEECGKAFKQASHLTIHKIIHTGEKPYKYEECGKVFSQSSHLTTQKILHTGENLYKCKECGKAFNLFSNLTNHKRIHAGEKPYKCKECGRAFNISSNLNKQEKIHTGGKLNKCEECDKAFNRSLKLTAHKKILMEEKPYKCEECGKVFNQFSTLTRHKIIHTGEKPYKCKECGKAFNQSSNLTEHKKIHTAEKSYKCEECGKAFNQHSNLINHRKIYSGEKPYKCEECGKAFNRSSTLTRHKKIHTGEKPYKCEECDRAFSQSSNLTEHKKIHTGEKPYKCEECGKAFNRFSTLTKHKRIHTGEKPYKCEECGKAFNQSYQLTRHKIVHTKEKLNKCEEFGKAFKQSSHRTIHKIIHTGEKPYKCEEHGKVFNQSSNLTTQKIIHTGENLYKFEEHGKAFNLFSNITNHKIIYTGEKPHKCEECGKAYNRFSNLTIHKRIHTGEKPYQCAECGKAFNCSSTLNRHKIIHTGEKPYKCKECGKAFNLSSTLTAHKKIHTGEKPYKCEECGKAFNQSSNLTTHKKIHTSEKPYKCEECGKSFNQFSSLNIHKIIHTGEKPYKCGDYGRAFNLSSNLTTHKKIHTGEKPYKCEYGKT</sequence>
<name>ZN107_HUMAN</name>
<comment type="function">
    <text>May be involved in transcriptional regulation.</text>
</comment>
<comment type="interaction">
    <interactant intactId="EBI-7234993">
        <id>Q9UII5</id>
    </interactant>
    <interactant intactId="EBI-10961706">
        <id>Q96ED9-2</id>
        <label>HOOK2</label>
    </interactant>
    <organismsDiffer>false</organismsDiffer>
    <experiments>3</experiments>
</comment>
<comment type="interaction">
    <interactant intactId="EBI-7234993">
        <id>Q9UII5</id>
    </interactant>
    <interactant intactId="EBI-10171774">
        <id>P60410</id>
        <label>KRTAP10-8</label>
    </interactant>
    <organismsDiffer>false</organismsDiffer>
    <experiments>3</experiments>
</comment>
<comment type="interaction">
    <interactant intactId="EBI-7234993">
        <id>Q9UII5</id>
    </interactant>
    <interactant intactId="EBI-11097439">
        <id>P26368-2</id>
        <label>U2AF2</label>
    </interactant>
    <organismsDiffer>false</organismsDiffer>
    <experiments>3</experiments>
</comment>
<comment type="subcellular location">
    <subcellularLocation>
        <location evidence="2">Nucleus</location>
    </subcellularLocation>
</comment>
<comment type="tissue specificity">
    <text>Expressed in brain, heart, skeletal muscle, kidney and pancreas. Weakly expressed in aorta, liver and lung.</text>
</comment>
<comment type="similarity">
    <text evidence="2">Belongs to the krueppel C2H2-type zinc-finger protein family.</text>
</comment>
<evidence type="ECO:0000255" key="1">
    <source>
        <dbReference type="PROSITE-ProRule" id="PRU00042"/>
    </source>
</evidence>
<evidence type="ECO:0000305" key="2"/>
<evidence type="ECO:0007744" key="3">
    <source>
    </source>
</evidence>
<proteinExistence type="evidence at protein level"/>
<protein>
    <recommendedName>
        <fullName>Zinc finger protein 107</fullName>
    </recommendedName>
    <alternativeName>
        <fullName>Zinc finger protein 588</fullName>
    </alternativeName>
    <alternativeName>
        <fullName>Zinc finger protein ZFD25</fullName>
    </alternativeName>
</protein>